<gene>
    <name evidence="1" type="primary">hemE</name>
    <name type="ordered locus">NMB0781</name>
</gene>
<protein>
    <recommendedName>
        <fullName evidence="1">Uroporphyrinogen decarboxylase</fullName>
        <shortName evidence="1">UPD</shortName>
        <shortName evidence="1">URO-D</shortName>
        <ecNumber evidence="1">4.1.1.37</ecNumber>
    </recommendedName>
</protein>
<sequence length="354" mass="39105">MISLKNDTFLRALLKQPVEYTPIWMMRQAGRYLPEYKATRAKAGSFLDLCKNTELATEVTIQPLERFDLDAAILFSDILTVPDAMGLGLYFAEGEGPKFKRALQHEADIAKLHVPDMEKLQYVFDAVTSIRKALDGRVPLIGFSGSPFTLACYMVEGGGSKEFRTIKTMMYSRPDLLHKILDTNAQAVTAYLNAQIDAGAQAVQIFDTWGGVLSDAAFKEFSLKYIRQIVAGLKRESEGRRVPVIVFAKGGGLWLESMAQIGADALGLDWTCNIGEARRRVGKQVALQGNFDPFALFGTPESIRTEVARILADYGHGSGHVFNLGHGINQHADPEHAKILVDTVHELSRQYHGG</sequence>
<proteinExistence type="inferred from homology"/>
<organism>
    <name type="scientific">Neisseria meningitidis serogroup B (strain ATCC BAA-335 / MC58)</name>
    <dbReference type="NCBI Taxonomy" id="122586"/>
    <lineage>
        <taxon>Bacteria</taxon>
        <taxon>Pseudomonadati</taxon>
        <taxon>Pseudomonadota</taxon>
        <taxon>Betaproteobacteria</taxon>
        <taxon>Neisseriales</taxon>
        <taxon>Neisseriaceae</taxon>
        <taxon>Neisseria</taxon>
    </lineage>
</organism>
<keyword id="KW-0963">Cytoplasm</keyword>
<keyword id="KW-0210">Decarboxylase</keyword>
<keyword id="KW-0456">Lyase</keyword>
<keyword id="KW-0627">Porphyrin biosynthesis</keyword>
<keyword id="KW-1185">Reference proteome</keyword>
<dbReference type="EC" id="4.1.1.37" evidence="1"/>
<dbReference type="EMBL" id="AE002098">
    <property type="protein sequence ID" value="AAF41194.1"/>
    <property type="molecule type" value="Genomic_DNA"/>
</dbReference>
<dbReference type="PIR" id="B81158">
    <property type="entry name" value="B81158"/>
</dbReference>
<dbReference type="RefSeq" id="NP_273823.1">
    <property type="nucleotide sequence ID" value="NC_003112.2"/>
</dbReference>
<dbReference type="RefSeq" id="WP_002222724.1">
    <property type="nucleotide sequence ID" value="NC_003112.2"/>
</dbReference>
<dbReference type="SMR" id="Q9K041"/>
<dbReference type="FunCoup" id="Q9K041">
    <property type="interactions" value="483"/>
</dbReference>
<dbReference type="STRING" id="122586.NMB0781"/>
<dbReference type="PaxDb" id="122586-NMB0781"/>
<dbReference type="KEGG" id="nme:NMB0781"/>
<dbReference type="PATRIC" id="fig|122586.8.peg.989"/>
<dbReference type="HOGENOM" id="CLU_040933_0_0_4"/>
<dbReference type="InParanoid" id="Q9K041"/>
<dbReference type="OrthoDB" id="9806656at2"/>
<dbReference type="UniPathway" id="UPA00251">
    <property type="reaction ID" value="UER00321"/>
</dbReference>
<dbReference type="Proteomes" id="UP000000425">
    <property type="component" value="Chromosome"/>
</dbReference>
<dbReference type="GO" id="GO:0005829">
    <property type="term" value="C:cytosol"/>
    <property type="evidence" value="ECO:0000318"/>
    <property type="project" value="GO_Central"/>
</dbReference>
<dbReference type="GO" id="GO:0004853">
    <property type="term" value="F:uroporphyrinogen decarboxylase activity"/>
    <property type="evidence" value="ECO:0000318"/>
    <property type="project" value="GO_Central"/>
</dbReference>
<dbReference type="GO" id="GO:0006783">
    <property type="term" value="P:heme biosynthetic process"/>
    <property type="evidence" value="ECO:0000318"/>
    <property type="project" value="GO_Central"/>
</dbReference>
<dbReference type="GO" id="GO:0019353">
    <property type="term" value="P:protoporphyrinogen IX biosynthetic process from glutamate"/>
    <property type="evidence" value="ECO:0000318"/>
    <property type="project" value="GO_Central"/>
</dbReference>
<dbReference type="CDD" id="cd00717">
    <property type="entry name" value="URO-D"/>
    <property type="match status" value="1"/>
</dbReference>
<dbReference type="FunFam" id="3.20.20.210:FF:000001">
    <property type="entry name" value="Uroporphyrinogen decarboxylase"/>
    <property type="match status" value="1"/>
</dbReference>
<dbReference type="Gene3D" id="3.20.20.210">
    <property type="match status" value="1"/>
</dbReference>
<dbReference type="HAMAP" id="MF_00218">
    <property type="entry name" value="URO_D"/>
    <property type="match status" value="1"/>
</dbReference>
<dbReference type="InterPro" id="IPR038071">
    <property type="entry name" value="UROD/MetE-like_sf"/>
</dbReference>
<dbReference type="InterPro" id="IPR006361">
    <property type="entry name" value="Uroporphyrinogen_deCO2ase_HemE"/>
</dbReference>
<dbReference type="InterPro" id="IPR000257">
    <property type="entry name" value="Uroporphyrinogen_deCOase"/>
</dbReference>
<dbReference type="NCBIfam" id="TIGR01464">
    <property type="entry name" value="hemE"/>
    <property type="match status" value="1"/>
</dbReference>
<dbReference type="PANTHER" id="PTHR21091">
    <property type="entry name" value="METHYLTETRAHYDROFOLATE:HOMOCYSTEINE METHYLTRANSFERASE RELATED"/>
    <property type="match status" value="1"/>
</dbReference>
<dbReference type="PANTHER" id="PTHR21091:SF169">
    <property type="entry name" value="UROPORPHYRINOGEN DECARBOXYLASE"/>
    <property type="match status" value="1"/>
</dbReference>
<dbReference type="Pfam" id="PF01208">
    <property type="entry name" value="URO-D"/>
    <property type="match status" value="1"/>
</dbReference>
<dbReference type="SUPFAM" id="SSF51726">
    <property type="entry name" value="UROD/MetE-like"/>
    <property type="match status" value="1"/>
</dbReference>
<dbReference type="PROSITE" id="PS00906">
    <property type="entry name" value="UROD_1"/>
    <property type="match status" value="1"/>
</dbReference>
<dbReference type="PROSITE" id="PS00907">
    <property type="entry name" value="UROD_2"/>
    <property type="match status" value="1"/>
</dbReference>
<name>DCUP_NEIMB</name>
<reference key="1">
    <citation type="journal article" date="2000" name="Science">
        <title>Complete genome sequence of Neisseria meningitidis serogroup B strain MC58.</title>
        <authorList>
            <person name="Tettelin H."/>
            <person name="Saunders N.J."/>
            <person name="Heidelberg J.F."/>
            <person name="Jeffries A.C."/>
            <person name="Nelson K.E."/>
            <person name="Eisen J.A."/>
            <person name="Ketchum K.A."/>
            <person name="Hood D.W."/>
            <person name="Peden J.F."/>
            <person name="Dodson R.J."/>
            <person name="Nelson W.C."/>
            <person name="Gwinn M.L."/>
            <person name="DeBoy R.T."/>
            <person name="Peterson J.D."/>
            <person name="Hickey E.K."/>
            <person name="Haft D.H."/>
            <person name="Salzberg S.L."/>
            <person name="White O."/>
            <person name="Fleischmann R.D."/>
            <person name="Dougherty B.A."/>
            <person name="Mason T.M."/>
            <person name="Ciecko A."/>
            <person name="Parksey D.S."/>
            <person name="Blair E."/>
            <person name="Cittone H."/>
            <person name="Clark E.B."/>
            <person name="Cotton M.D."/>
            <person name="Utterback T.R."/>
            <person name="Khouri H.M."/>
            <person name="Qin H."/>
            <person name="Vamathevan J.J."/>
            <person name="Gill J."/>
            <person name="Scarlato V."/>
            <person name="Masignani V."/>
            <person name="Pizza M."/>
            <person name="Grandi G."/>
            <person name="Sun L."/>
            <person name="Smith H.O."/>
            <person name="Fraser C.M."/>
            <person name="Moxon E.R."/>
            <person name="Rappuoli R."/>
            <person name="Venter J.C."/>
        </authorList>
    </citation>
    <scope>NUCLEOTIDE SEQUENCE [LARGE SCALE GENOMIC DNA]</scope>
    <source>
        <strain>ATCC BAA-335 / MC58</strain>
    </source>
</reference>
<comment type="function">
    <text evidence="1">Catalyzes the decarboxylation of four acetate groups of uroporphyrinogen-III to yield coproporphyrinogen-III.</text>
</comment>
<comment type="catalytic activity">
    <reaction evidence="1">
        <text>uroporphyrinogen III + 4 H(+) = coproporphyrinogen III + 4 CO2</text>
        <dbReference type="Rhea" id="RHEA:19865"/>
        <dbReference type="ChEBI" id="CHEBI:15378"/>
        <dbReference type="ChEBI" id="CHEBI:16526"/>
        <dbReference type="ChEBI" id="CHEBI:57308"/>
        <dbReference type="ChEBI" id="CHEBI:57309"/>
        <dbReference type="EC" id="4.1.1.37"/>
    </reaction>
</comment>
<comment type="pathway">
    <text evidence="1">Porphyrin-containing compound metabolism; protoporphyrin-IX biosynthesis; coproporphyrinogen-III from 5-aminolevulinate: step 4/4.</text>
</comment>
<comment type="subunit">
    <text evidence="1">Homodimer.</text>
</comment>
<comment type="subcellular location">
    <subcellularLocation>
        <location evidence="1">Cytoplasm</location>
    </subcellularLocation>
</comment>
<comment type="similarity">
    <text evidence="1">Belongs to the uroporphyrinogen decarboxylase family.</text>
</comment>
<evidence type="ECO:0000255" key="1">
    <source>
        <dbReference type="HAMAP-Rule" id="MF_00218"/>
    </source>
</evidence>
<accession>Q9K041</accession>
<feature type="chain" id="PRO_0000187618" description="Uroporphyrinogen decarboxylase">
    <location>
        <begin position="1"/>
        <end position="354"/>
    </location>
</feature>
<feature type="binding site" evidence="1">
    <location>
        <begin position="27"/>
        <end position="31"/>
    </location>
    <ligand>
        <name>substrate</name>
    </ligand>
</feature>
<feature type="binding site" evidence="1">
    <location>
        <position position="46"/>
    </location>
    <ligand>
        <name>substrate</name>
    </ligand>
</feature>
<feature type="binding site" evidence="1">
    <location>
        <position position="77"/>
    </location>
    <ligand>
        <name>substrate</name>
    </ligand>
</feature>
<feature type="binding site" evidence="1">
    <location>
        <position position="153"/>
    </location>
    <ligand>
        <name>substrate</name>
    </ligand>
</feature>
<feature type="binding site" evidence="1">
    <location>
        <position position="208"/>
    </location>
    <ligand>
        <name>substrate</name>
    </ligand>
</feature>
<feature type="binding site" evidence="1">
    <location>
        <position position="326"/>
    </location>
    <ligand>
        <name>substrate</name>
    </ligand>
</feature>
<feature type="site" description="Transition state stabilizer" evidence="1">
    <location>
        <position position="77"/>
    </location>
</feature>